<organism>
    <name type="scientific">Legionella pneumophila (strain Lens)</name>
    <dbReference type="NCBI Taxonomy" id="297245"/>
    <lineage>
        <taxon>Bacteria</taxon>
        <taxon>Pseudomonadati</taxon>
        <taxon>Pseudomonadota</taxon>
        <taxon>Gammaproteobacteria</taxon>
        <taxon>Legionellales</taxon>
        <taxon>Legionellaceae</taxon>
        <taxon>Legionella</taxon>
    </lineage>
</organism>
<feature type="chain" id="PRO_0000161485" description="tRNA uridine(34) hydroxylase">
    <location>
        <begin position="1"/>
        <end position="254"/>
    </location>
</feature>
<feature type="domain" description="Rhodanese" evidence="1">
    <location>
        <begin position="123"/>
        <end position="217"/>
    </location>
</feature>
<feature type="active site" description="Cysteine persulfide intermediate" evidence="1">
    <location>
        <position position="177"/>
    </location>
</feature>
<sequence>MKDIIIASFYKFIPLNDFESLREPILTKMHEIGIKGTIILAHEGVNGGFAGNREQMYIFYDYLRSDSRFADLHFKETYDNKNPFDKAKVKLRKEIVTMGVQKVDPSYNAGTYLSPEEWHQFIQDPNVILLDTRNDYEYELGTFKNAINPDIENFREFPDYVQRNLIDKKDKKIAMFCTGGIRCEKTTAYMKELGFQHVYQLHDGILNYLESIPEGESLWEGKCFVFDDRVAVDQKLDRVYPQLPQDYKYEREQK</sequence>
<proteinExistence type="inferred from homology"/>
<protein>
    <recommendedName>
        <fullName evidence="1">tRNA uridine(34) hydroxylase</fullName>
        <ecNumber evidence="1">1.14.-.-</ecNumber>
    </recommendedName>
    <alternativeName>
        <fullName evidence="1">tRNA hydroxylation protein O</fullName>
    </alternativeName>
</protein>
<reference key="1">
    <citation type="journal article" date="2004" name="Nat. Genet.">
        <title>Evidence in the Legionella pneumophila genome for exploitation of host cell functions and high genome plasticity.</title>
        <authorList>
            <person name="Cazalet C."/>
            <person name="Rusniok C."/>
            <person name="Brueggemann H."/>
            <person name="Zidane N."/>
            <person name="Magnier A."/>
            <person name="Ma L."/>
            <person name="Tichit M."/>
            <person name="Jarraud S."/>
            <person name="Bouchier C."/>
            <person name="Vandenesch F."/>
            <person name="Kunst F."/>
            <person name="Etienne J."/>
            <person name="Glaser P."/>
            <person name="Buchrieser C."/>
        </authorList>
    </citation>
    <scope>NUCLEOTIDE SEQUENCE [LARGE SCALE GENOMIC DNA]</scope>
    <source>
        <strain>Lens</strain>
    </source>
</reference>
<name>TRHO_LEGPL</name>
<evidence type="ECO:0000255" key="1">
    <source>
        <dbReference type="HAMAP-Rule" id="MF_00469"/>
    </source>
</evidence>
<keyword id="KW-0560">Oxidoreductase</keyword>
<keyword id="KW-0819">tRNA processing</keyword>
<dbReference type="EC" id="1.14.-.-" evidence="1"/>
<dbReference type="EMBL" id="CR628337">
    <property type="protein sequence ID" value="CAH16993.1"/>
    <property type="molecule type" value="Genomic_DNA"/>
</dbReference>
<dbReference type="RefSeq" id="WP_011216673.1">
    <property type="nucleotide sequence ID" value="NC_006369.1"/>
</dbReference>
<dbReference type="SMR" id="Q5WSX6"/>
<dbReference type="KEGG" id="lpf:lpl2750"/>
<dbReference type="LegioList" id="lpl2750"/>
<dbReference type="HOGENOM" id="CLU_038878_0_1_6"/>
<dbReference type="Proteomes" id="UP000002517">
    <property type="component" value="Chromosome"/>
</dbReference>
<dbReference type="GO" id="GO:0016705">
    <property type="term" value="F:oxidoreductase activity, acting on paired donors, with incorporation or reduction of molecular oxygen"/>
    <property type="evidence" value="ECO:0007669"/>
    <property type="project" value="UniProtKB-UniRule"/>
</dbReference>
<dbReference type="GO" id="GO:0006400">
    <property type="term" value="P:tRNA modification"/>
    <property type="evidence" value="ECO:0007669"/>
    <property type="project" value="UniProtKB-UniRule"/>
</dbReference>
<dbReference type="CDD" id="cd01518">
    <property type="entry name" value="RHOD_YceA"/>
    <property type="match status" value="1"/>
</dbReference>
<dbReference type="Gene3D" id="3.30.70.100">
    <property type="match status" value="1"/>
</dbReference>
<dbReference type="Gene3D" id="3.40.250.10">
    <property type="entry name" value="Rhodanese-like domain"/>
    <property type="match status" value="1"/>
</dbReference>
<dbReference type="HAMAP" id="MF_00469">
    <property type="entry name" value="TrhO"/>
    <property type="match status" value="1"/>
</dbReference>
<dbReference type="InterPro" id="IPR001763">
    <property type="entry name" value="Rhodanese-like_dom"/>
</dbReference>
<dbReference type="InterPro" id="IPR036873">
    <property type="entry name" value="Rhodanese-like_dom_sf"/>
</dbReference>
<dbReference type="InterPro" id="IPR020936">
    <property type="entry name" value="TrhO"/>
</dbReference>
<dbReference type="InterPro" id="IPR040503">
    <property type="entry name" value="TRHO_N"/>
</dbReference>
<dbReference type="NCBIfam" id="NF001135">
    <property type="entry name" value="PRK00142.1-3"/>
    <property type="match status" value="1"/>
</dbReference>
<dbReference type="NCBIfam" id="NF001136">
    <property type="entry name" value="PRK00142.1-4"/>
    <property type="match status" value="1"/>
</dbReference>
<dbReference type="PANTHER" id="PTHR43268:SF3">
    <property type="entry name" value="RHODANESE-LIKE DOMAIN-CONTAINING PROTEIN 7-RELATED"/>
    <property type="match status" value="1"/>
</dbReference>
<dbReference type="PANTHER" id="PTHR43268">
    <property type="entry name" value="THIOSULFATE SULFURTRANSFERASE/RHODANESE-LIKE DOMAIN-CONTAINING PROTEIN 2"/>
    <property type="match status" value="1"/>
</dbReference>
<dbReference type="Pfam" id="PF00581">
    <property type="entry name" value="Rhodanese"/>
    <property type="match status" value="1"/>
</dbReference>
<dbReference type="Pfam" id="PF17773">
    <property type="entry name" value="UPF0176_N"/>
    <property type="match status" value="1"/>
</dbReference>
<dbReference type="SMART" id="SM00450">
    <property type="entry name" value="RHOD"/>
    <property type="match status" value="1"/>
</dbReference>
<dbReference type="SUPFAM" id="SSF52821">
    <property type="entry name" value="Rhodanese/Cell cycle control phosphatase"/>
    <property type="match status" value="1"/>
</dbReference>
<dbReference type="PROSITE" id="PS50206">
    <property type="entry name" value="RHODANESE_3"/>
    <property type="match status" value="1"/>
</dbReference>
<gene>
    <name evidence="1" type="primary">trhO</name>
    <name type="ordered locus">lpl2750</name>
</gene>
<comment type="function">
    <text evidence="1">Catalyzes oxygen-dependent 5-hydroxyuridine (ho5U) modification at position 34 in tRNAs.</text>
</comment>
<comment type="catalytic activity">
    <reaction evidence="1">
        <text>uridine(34) in tRNA + AH2 + O2 = 5-hydroxyuridine(34) in tRNA + A + H2O</text>
        <dbReference type="Rhea" id="RHEA:64224"/>
        <dbReference type="Rhea" id="RHEA-COMP:11727"/>
        <dbReference type="Rhea" id="RHEA-COMP:13381"/>
        <dbReference type="ChEBI" id="CHEBI:13193"/>
        <dbReference type="ChEBI" id="CHEBI:15377"/>
        <dbReference type="ChEBI" id="CHEBI:15379"/>
        <dbReference type="ChEBI" id="CHEBI:17499"/>
        <dbReference type="ChEBI" id="CHEBI:65315"/>
        <dbReference type="ChEBI" id="CHEBI:136877"/>
    </reaction>
</comment>
<comment type="similarity">
    <text evidence="1">Belongs to the TrhO family.</text>
</comment>
<accession>Q5WSX6</accession>